<proteinExistence type="evidence at protein level"/>
<accession>Q8CBF3</accession>
<accession>B1B1C2</accession>
<accession>Q3UY27</accession>
<accession>Q6PG23</accession>
<accession>Q8CBE2</accession>
<dbReference type="EC" id="2.7.10.1"/>
<dbReference type="EMBL" id="AK036148">
    <property type="protein sequence ID" value="BAC29320.1"/>
    <property type="molecule type" value="mRNA"/>
</dbReference>
<dbReference type="EMBL" id="AK036211">
    <property type="protein sequence ID" value="BAC29348.1"/>
    <property type="molecule type" value="mRNA"/>
</dbReference>
<dbReference type="EMBL" id="AK135018">
    <property type="protein sequence ID" value="BAE22386.1"/>
    <property type="molecule type" value="mRNA"/>
</dbReference>
<dbReference type="EMBL" id="AC109247">
    <property type="status" value="NOT_ANNOTATED_CDS"/>
    <property type="molecule type" value="Genomic_DNA"/>
</dbReference>
<dbReference type="EMBL" id="AC132684">
    <property type="status" value="NOT_ANNOTATED_CDS"/>
    <property type="molecule type" value="Genomic_DNA"/>
</dbReference>
<dbReference type="EMBL" id="AC156635">
    <property type="status" value="NOT_ANNOTATED_CDS"/>
    <property type="molecule type" value="Genomic_DNA"/>
</dbReference>
<dbReference type="EMBL" id="CT025594">
    <property type="status" value="NOT_ANNOTATED_CDS"/>
    <property type="molecule type" value="Genomic_DNA"/>
</dbReference>
<dbReference type="EMBL" id="BC057301">
    <property type="protein sequence ID" value="AAH57301.1"/>
    <property type="molecule type" value="mRNA"/>
</dbReference>
<dbReference type="CCDS" id="CCDS40742.1">
    <molecule id="Q8CBF3-1"/>
</dbReference>
<dbReference type="CCDS" id="CCDS52901.1">
    <molecule id="Q8CBF3-2"/>
</dbReference>
<dbReference type="RefSeq" id="NP_001161768.1">
    <molecule id="Q8CBF3-2"/>
    <property type="nucleotide sequence ID" value="NM_001168296.1"/>
</dbReference>
<dbReference type="RefSeq" id="NP_775623.3">
    <molecule id="Q8CBF3-1"/>
    <property type="nucleotide sequence ID" value="NM_173447.3"/>
</dbReference>
<dbReference type="SMR" id="Q8CBF3"/>
<dbReference type="BioGRID" id="234781">
    <property type="interactions" value="4"/>
</dbReference>
<dbReference type="FunCoup" id="Q8CBF3">
    <property type="interactions" value="1481"/>
</dbReference>
<dbReference type="IntAct" id="Q8CBF3">
    <property type="interactions" value="1"/>
</dbReference>
<dbReference type="STRING" id="10090.ENSMUSP00000035129"/>
<dbReference type="GlyCosmos" id="Q8CBF3">
    <property type="glycosylation" value="3 sites, No reported glycans"/>
</dbReference>
<dbReference type="GlyGen" id="Q8CBF3">
    <property type="glycosylation" value="4 sites, 3 N-linked glycans (4 sites)"/>
</dbReference>
<dbReference type="iPTMnet" id="Q8CBF3"/>
<dbReference type="PhosphoSitePlus" id="Q8CBF3"/>
<dbReference type="PaxDb" id="10090-ENSMUSP00000035129"/>
<dbReference type="PeptideAtlas" id="Q8CBF3"/>
<dbReference type="ProteomicsDB" id="277888">
    <molecule id="Q8CBF3-1"/>
</dbReference>
<dbReference type="ProteomicsDB" id="277889">
    <molecule id="Q8CBF3-2"/>
</dbReference>
<dbReference type="Antibodypedia" id="33398">
    <property type="antibodies" value="561 antibodies from 40 providers"/>
</dbReference>
<dbReference type="DNASU" id="270190"/>
<dbReference type="Ensembl" id="ENSMUST00000035129.14">
    <molecule id="Q8CBF3-1"/>
    <property type="protein sequence ID" value="ENSMUSP00000035129.8"/>
    <property type="gene ID" value="ENSMUSG00000032537.16"/>
</dbReference>
<dbReference type="Ensembl" id="ENSMUST00000085169.12">
    <molecule id="Q8CBF3-2"/>
    <property type="protein sequence ID" value="ENSMUSP00000082261.6"/>
    <property type="gene ID" value="ENSMUSG00000032537.16"/>
</dbReference>
<dbReference type="GeneID" id="270190"/>
<dbReference type="KEGG" id="mmu:270190"/>
<dbReference type="UCSC" id="uc009rfn.2">
    <molecule id="Q8CBF3-1"/>
    <property type="organism name" value="mouse"/>
</dbReference>
<dbReference type="UCSC" id="uc012gzg.1">
    <molecule id="Q8CBF3-2"/>
    <property type="organism name" value="mouse"/>
</dbReference>
<dbReference type="AGR" id="MGI:1096337"/>
<dbReference type="CTD" id="2047"/>
<dbReference type="MGI" id="MGI:1096337">
    <property type="gene designation" value="Ephb1"/>
</dbReference>
<dbReference type="VEuPathDB" id="HostDB:ENSMUSG00000032537"/>
<dbReference type="eggNOG" id="KOG0196">
    <property type="taxonomic scope" value="Eukaryota"/>
</dbReference>
<dbReference type="GeneTree" id="ENSGT00940000155297"/>
<dbReference type="HOGENOM" id="CLU_000288_141_0_1"/>
<dbReference type="InParanoid" id="Q8CBF3"/>
<dbReference type="OMA" id="AVAAMEX"/>
<dbReference type="OrthoDB" id="4062651at2759"/>
<dbReference type="PhylomeDB" id="Q8CBF3"/>
<dbReference type="TreeFam" id="TF315608"/>
<dbReference type="Reactome" id="R-MMU-2682334">
    <property type="pathway name" value="EPH-Ephrin signaling"/>
</dbReference>
<dbReference type="Reactome" id="R-MMU-3928662">
    <property type="pathway name" value="EPHB-mediated forward signaling"/>
</dbReference>
<dbReference type="Reactome" id="R-MMU-3928664">
    <property type="pathway name" value="Ephrin signaling"/>
</dbReference>
<dbReference type="Reactome" id="R-MMU-3928665">
    <property type="pathway name" value="EPH-ephrin mediated repulsion of cells"/>
</dbReference>
<dbReference type="BioGRID-ORCS" id="270190">
    <property type="hits" value="2 hits in 79 CRISPR screens"/>
</dbReference>
<dbReference type="ChiTaRS" id="Ephb1">
    <property type="organism name" value="mouse"/>
</dbReference>
<dbReference type="PRO" id="PR:Q8CBF3"/>
<dbReference type="Proteomes" id="UP000000589">
    <property type="component" value="Chromosome 9"/>
</dbReference>
<dbReference type="RNAct" id="Q8CBF3">
    <property type="molecule type" value="protein"/>
</dbReference>
<dbReference type="Bgee" id="ENSMUSG00000032537">
    <property type="expression patterns" value="Expressed in ear vesicle and 209 other cell types or tissues"/>
</dbReference>
<dbReference type="ExpressionAtlas" id="Q8CBF3">
    <property type="expression patterns" value="baseline and differential"/>
</dbReference>
<dbReference type="GO" id="GO:0030424">
    <property type="term" value="C:axon"/>
    <property type="evidence" value="ECO:0000314"/>
    <property type="project" value="MGI"/>
</dbReference>
<dbReference type="GO" id="GO:0005737">
    <property type="term" value="C:cytoplasm"/>
    <property type="evidence" value="ECO:0000314"/>
    <property type="project" value="MGI"/>
</dbReference>
<dbReference type="GO" id="GO:0005829">
    <property type="term" value="C:cytosol"/>
    <property type="evidence" value="ECO:0007669"/>
    <property type="project" value="Ensembl"/>
</dbReference>
<dbReference type="GO" id="GO:0030425">
    <property type="term" value="C:dendrite"/>
    <property type="evidence" value="ECO:0007669"/>
    <property type="project" value="UniProtKB-SubCell"/>
</dbReference>
<dbReference type="GO" id="GO:0031901">
    <property type="term" value="C:early endosome membrane"/>
    <property type="evidence" value="ECO:0000250"/>
    <property type="project" value="UniProtKB"/>
</dbReference>
<dbReference type="GO" id="GO:0005783">
    <property type="term" value="C:endoplasmic reticulum"/>
    <property type="evidence" value="ECO:0007669"/>
    <property type="project" value="Ensembl"/>
</dbReference>
<dbReference type="GO" id="GO:0032433">
    <property type="term" value="C:filopodium tip"/>
    <property type="evidence" value="ECO:0000314"/>
    <property type="project" value="MGI"/>
</dbReference>
<dbReference type="GO" id="GO:0098978">
    <property type="term" value="C:glutamatergic synapse"/>
    <property type="evidence" value="ECO:0000314"/>
    <property type="project" value="SynGO"/>
</dbReference>
<dbReference type="GO" id="GO:0016020">
    <property type="term" value="C:membrane"/>
    <property type="evidence" value="ECO:0000314"/>
    <property type="project" value="MGI"/>
</dbReference>
<dbReference type="GO" id="GO:0045121">
    <property type="term" value="C:membrane raft"/>
    <property type="evidence" value="ECO:0000314"/>
    <property type="project" value="MGI"/>
</dbReference>
<dbReference type="GO" id="GO:0005886">
    <property type="term" value="C:plasma membrane"/>
    <property type="evidence" value="ECO:0000250"/>
    <property type="project" value="UniProtKB"/>
</dbReference>
<dbReference type="GO" id="GO:0005524">
    <property type="term" value="F:ATP binding"/>
    <property type="evidence" value="ECO:0007669"/>
    <property type="project" value="UniProtKB-KW"/>
</dbReference>
<dbReference type="GO" id="GO:0008046">
    <property type="term" value="F:axon guidance receptor activity"/>
    <property type="evidence" value="ECO:0000314"/>
    <property type="project" value="MGI"/>
</dbReference>
<dbReference type="GO" id="GO:0044877">
    <property type="term" value="F:protein-containing complex binding"/>
    <property type="evidence" value="ECO:0000353"/>
    <property type="project" value="MGI"/>
</dbReference>
<dbReference type="GO" id="GO:0005005">
    <property type="term" value="F:transmembrane-ephrin receptor activity"/>
    <property type="evidence" value="ECO:0000250"/>
    <property type="project" value="UniProtKB"/>
</dbReference>
<dbReference type="GO" id="GO:0001525">
    <property type="term" value="P:angiogenesis"/>
    <property type="evidence" value="ECO:0000250"/>
    <property type="project" value="UniProtKB"/>
</dbReference>
<dbReference type="GO" id="GO:0007411">
    <property type="term" value="P:axon guidance"/>
    <property type="evidence" value="ECO:0000314"/>
    <property type="project" value="MGI"/>
</dbReference>
<dbReference type="GO" id="GO:0048593">
    <property type="term" value="P:camera-type eye morphogenesis"/>
    <property type="evidence" value="ECO:0000315"/>
    <property type="project" value="MGI"/>
</dbReference>
<dbReference type="GO" id="GO:0060326">
    <property type="term" value="P:cell chemotaxis"/>
    <property type="evidence" value="ECO:0000315"/>
    <property type="project" value="UniProtKB"/>
</dbReference>
<dbReference type="GO" id="GO:0031589">
    <property type="term" value="P:cell-substrate adhesion"/>
    <property type="evidence" value="ECO:0000250"/>
    <property type="project" value="UniProtKB"/>
</dbReference>
<dbReference type="GO" id="GO:0021952">
    <property type="term" value="P:central nervous system projection neuron axonogenesis"/>
    <property type="evidence" value="ECO:0000314"/>
    <property type="project" value="MGI"/>
</dbReference>
<dbReference type="GO" id="GO:0021545">
    <property type="term" value="P:cranial nerve development"/>
    <property type="evidence" value="ECO:0000315"/>
    <property type="project" value="MGI"/>
</dbReference>
<dbReference type="GO" id="GO:0060996">
    <property type="term" value="P:dendritic spine development"/>
    <property type="evidence" value="ECO:0000315"/>
    <property type="project" value="UniProtKB"/>
</dbReference>
<dbReference type="GO" id="GO:0060997">
    <property type="term" value="P:dendritic spine morphogenesis"/>
    <property type="evidence" value="ECO:0000315"/>
    <property type="project" value="UniProtKB"/>
</dbReference>
<dbReference type="GO" id="GO:0050965">
    <property type="term" value="P:detection of temperature stimulus involved in sensory perception of pain"/>
    <property type="evidence" value="ECO:0000315"/>
    <property type="project" value="UniProtKB"/>
</dbReference>
<dbReference type="GO" id="GO:0048013">
    <property type="term" value="P:ephrin receptor signaling pathway"/>
    <property type="evidence" value="ECO:0000314"/>
    <property type="project" value="MGI"/>
</dbReference>
<dbReference type="GO" id="GO:0030010">
    <property type="term" value="P:establishment of cell polarity"/>
    <property type="evidence" value="ECO:0000315"/>
    <property type="project" value="UniProtKB"/>
</dbReference>
<dbReference type="GO" id="GO:0021934">
    <property type="term" value="P:hindbrain tangential cell migration"/>
    <property type="evidence" value="ECO:0007669"/>
    <property type="project" value="Ensembl"/>
</dbReference>
<dbReference type="GO" id="GO:0001771">
    <property type="term" value="P:immunological synapse formation"/>
    <property type="evidence" value="ECO:0000266"/>
    <property type="project" value="MGI"/>
</dbReference>
<dbReference type="GO" id="GO:0050804">
    <property type="term" value="P:modulation of chemical synaptic transmission"/>
    <property type="evidence" value="ECO:0000314"/>
    <property type="project" value="SynGO"/>
</dbReference>
<dbReference type="GO" id="GO:1902725">
    <property type="term" value="P:negative regulation of satellite cell differentiation"/>
    <property type="evidence" value="ECO:0000315"/>
    <property type="project" value="UniProtKB"/>
</dbReference>
<dbReference type="GO" id="GO:1902723">
    <property type="term" value="P:negative regulation of skeletal muscle satellite cell proliferation"/>
    <property type="evidence" value="ECO:0000315"/>
    <property type="project" value="UniProtKB"/>
</dbReference>
<dbReference type="GO" id="GO:0061351">
    <property type="term" value="P:neural precursor cell proliferation"/>
    <property type="evidence" value="ECO:0000315"/>
    <property type="project" value="UniProtKB"/>
</dbReference>
<dbReference type="GO" id="GO:0022008">
    <property type="term" value="P:neurogenesis"/>
    <property type="evidence" value="ECO:0000315"/>
    <property type="project" value="UniProtKB"/>
</dbReference>
<dbReference type="GO" id="GO:0021631">
    <property type="term" value="P:optic nerve morphogenesis"/>
    <property type="evidence" value="ECO:0000315"/>
    <property type="project" value="MGI"/>
</dbReference>
<dbReference type="GO" id="GO:0051965">
    <property type="term" value="P:positive regulation of synapse assembly"/>
    <property type="evidence" value="ECO:0000315"/>
    <property type="project" value="UniProtKB"/>
</dbReference>
<dbReference type="GO" id="GO:0046777">
    <property type="term" value="P:protein autophosphorylation"/>
    <property type="evidence" value="ECO:0000250"/>
    <property type="project" value="UniProtKB"/>
</dbReference>
<dbReference type="GO" id="GO:0070372">
    <property type="term" value="P:regulation of ERK1 and ERK2 cascade"/>
    <property type="evidence" value="ECO:0000250"/>
    <property type="project" value="UniProtKB"/>
</dbReference>
<dbReference type="GO" id="GO:0046328">
    <property type="term" value="P:regulation of JNK cascade"/>
    <property type="evidence" value="ECO:0000250"/>
    <property type="project" value="UniProtKB"/>
</dbReference>
<dbReference type="GO" id="GO:0031290">
    <property type="term" value="P:retinal ganglion cell axon guidance"/>
    <property type="evidence" value="ECO:0000314"/>
    <property type="project" value="MGI"/>
</dbReference>
<dbReference type="GO" id="GO:0014719">
    <property type="term" value="P:skeletal muscle satellite cell activation"/>
    <property type="evidence" value="ECO:0000315"/>
    <property type="project" value="UniProtKB"/>
</dbReference>
<dbReference type="CDD" id="cd10476">
    <property type="entry name" value="EphR_LBD_B1"/>
    <property type="match status" value="1"/>
</dbReference>
<dbReference type="CDD" id="cd00063">
    <property type="entry name" value="FN3"/>
    <property type="match status" value="2"/>
</dbReference>
<dbReference type="CDD" id="cd05065">
    <property type="entry name" value="PTKc_EphR_B"/>
    <property type="match status" value="1"/>
</dbReference>
<dbReference type="CDD" id="cd09551">
    <property type="entry name" value="SAM_EPH-B1"/>
    <property type="match status" value="1"/>
</dbReference>
<dbReference type="FunFam" id="2.60.40.10:FF:000041">
    <property type="entry name" value="ephrin type-A receptor 3"/>
    <property type="match status" value="1"/>
</dbReference>
<dbReference type="FunFam" id="1.10.150.50:FF:000001">
    <property type="entry name" value="Ephrin type-A receptor 5"/>
    <property type="match status" value="1"/>
</dbReference>
<dbReference type="FunFam" id="2.10.50.10:FF:000001">
    <property type="entry name" value="Ephrin type-A receptor 5"/>
    <property type="match status" value="1"/>
</dbReference>
<dbReference type="FunFam" id="2.60.40.1770:FF:000001">
    <property type="entry name" value="Ephrin type-A receptor 5"/>
    <property type="match status" value="1"/>
</dbReference>
<dbReference type="FunFam" id="3.30.200.20:FF:000001">
    <property type="entry name" value="Ephrin type-A receptor 5"/>
    <property type="match status" value="1"/>
</dbReference>
<dbReference type="FunFam" id="1.10.510.10:FF:000015">
    <property type="entry name" value="Ephrin type-B receptor 2"/>
    <property type="match status" value="1"/>
</dbReference>
<dbReference type="FunFam" id="2.60.120.260:FF:000004">
    <property type="entry name" value="Ephrin type-B receptor 2"/>
    <property type="match status" value="1"/>
</dbReference>
<dbReference type="FunFam" id="2.60.40.10:FF:000110">
    <property type="entry name" value="Ephrin type-B receptor 2"/>
    <property type="match status" value="1"/>
</dbReference>
<dbReference type="Gene3D" id="2.60.40.1770">
    <property type="entry name" value="ephrin a2 ectodomain"/>
    <property type="match status" value="1"/>
</dbReference>
<dbReference type="Gene3D" id="2.60.120.260">
    <property type="entry name" value="Galactose-binding domain-like"/>
    <property type="match status" value="1"/>
</dbReference>
<dbReference type="Gene3D" id="2.60.40.10">
    <property type="entry name" value="Immunoglobulins"/>
    <property type="match status" value="2"/>
</dbReference>
<dbReference type="Gene3D" id="3.30.200.20">
    <property type="entry name" value="Phosphorylase Kinase, domain 1"/>
    <property type="match status" value="1"/>
</dbReference>
<dbReference type="Gene3D" id="1.10.150.50">
    <property type="entry name" value="Transcription Factor, Ets-1"/>
    <property type="match status" value="1"/>
</dbReference>
<dbReference type="Gene3D" id="1.10.510.10">
    <property type="entry name" value="Transferase(Phosphotransferase) domain 1"/>
    <property type="match status" value="1"/>
</dbReference>
<dbReference type="Gene3D" id="2.10.50.10">
    <property type="entry name" value="Tumor Necrosis Factor Receptor, subunit A, domain 2"/>
    <property type="match status" value="1"/>
</dbReference>
<dbReference type="InterPro" id="IPR027936">
    <property type="entry name" value="Eph_TM"/>
</dbReference>
<dbReference type="InterPro" id="IPR034231">
    <property type="entry name" value="EphB1_rcpt_lig-bd"/>
</dbReference>
<dbReference type="InterPro" id="IPR042819">
    <property type="entry name" value="EphB1_SAM"/>
</dbReference>
<dbReference type="InterPro" id="IPR001090">
    <property type="entry name" value="Ephrin_rcpt_lig-bd_dom"/>
</dbReference>
<dbReference type="InterPro" id="IPR050449">
    <property type="entry name" value="Ephrin_rcpt_TKs"/>
</dbReference>
<dbReference type="InterPro" id="IPR003961">
    <property type="entry name" value="FN3_dom"/>
</dbReference>
<dbReference type="InterPro" id="IPR036116">
    <property type="entry name" value="FN3_sf"/>
</dbReference>
<dbReference type="InterPro" id="IPR008979">
    <property type="entry name" value="Galactose-bd-like_sf"/>
</dbReference>
<dbReference type="InterPro" id="IPR009030">
    <property type="entry name" value="Growth_fac_rcpt_cys_sf"/>
</dbReference>
<dbReference type="InterPro" id="IPR013783">
    <property type="entry name" value="Ig-like_fold"/>
</dbReference>
<dbReference type="InterPro" id="IPR011009">
    <property type="entry name" value="Kinase-like_dom_sf"/>
</dbReference>
<dbReference type="InterPro" id="IPR000719">
    <property type="entry name" value="Prot_kinase_dom"/>
</dbReference>
<dbReference type="InterPro" id="IPR017441">
    <property type="entry name" value="Protein_kinase_ATP_BS"/>
</dbReference>
<dbReference type="InterPro" id="IPR001660">
    <property type="entry name" value="SAM"/>
</dbReference>
<dbReference type="InterPro" id="IPR013761">
    <property type="entry name" value="SAM/pointed_sf"/>
</dbReference>
<dbReference type="InterPro" id="IPR001245">
    <property type="entry name" value="Ser-Thr/Tyr_kinase_cat_dom"/>
</dbReference>
<dbReference type="InterPro" id="IPR008266">
    <property type="entry name" value="Tyr_kinase_AS"/>
</dbReference>
<dbReference type="InterPro" id="IPR020635">
    <property type="entry name" value="Tyr_kinase_cat_dom"/>
</dbReference>
<dbReference type="InterPro" id="IPR016257">
    <property type="entry name" value="Tyr_kinase_ephrin_rcpt"/>
</dbReference>
<dbReference type="InterPro" id="IPR001426">
    <property type="entry name" value="Tyr_kinase_rcpt_V_CS"/>
</dbReference>
<dbReference type="PANTHER" id="PTHR46877">
    <property type="entry name" value="EPH RECEPTOR A5"/>
    <property type="match status" value="1"/>
</dbReference>
<dbReference type="PANTHER" id="PTHR46877:SF17">
    <property type="entry name" value="EPHRIN TYPE-B RECEPTOR 1"/>
    <property type="match status" value="1"/>
</dbReference>
<dbReference type="Pfam" id="PF14575">
    <property type="entry name" value="EphA2_TM"/>
    <property type="match status" value="1"/>
</dbReference>
<dbReference type="Pfam" id="PF01404">
    <property type="entry name" value="Ephrin_lbd"/>
    <property type="match status" value="1"/>
</dbReference>
<dbReference type="Pfam" id="PF00041">
    <property type="entry name" value="fn3"/>
    <property type="match status" value="2"/>
</dbReference>
<dbReference type="Pfam" id="PF07714">
    <property type="entry name" value="PK_Tyr_Ser-Thr"/>
    <property type="match status" value="1"/>
</dbReference>
<dbReference type="Pfam" id="PF00536">
    <property type="entry name" value="SAM_1"/>
    <property type="match status" value="1"/>
</dbReference>
<dbReference type="PIRSF" id="PIRSF000666">
    <property type="entry name" value="TyrPK_ephrin_receptor"/>
    <property type="match status" value="1"/>
</dbReference>
<dbReference type="PRINTS" id="PR00014">
    <property type="entry name" value="FNTYPEIII"/>
</dbReference>
<dbReference type="PRINTS" id="PR00109">
    <property type="entry name" value="TYRKINASE"/>
</dbReference>
<dbReference type="SMART" id="SM00615">
    <property type="entry name" value="EPH_lbd"/>
    <property type="match status" value="1"/>
</dbReference>
<dbReference type="SMART" id="SM01411">
    <property type="entry name" value="Ephrin_rec_like"/>
    <property type="match status" value="1"/>
</dbReference>
<dbReference type="SMART" id="SM00060">
    <property type="entry name" value="FN3"/>
    <property type="match status" value="2"/>
</dbReference>
<dbReference type="SMART" id="SM00454">
    <property type="entry name" value="SAM"/>
    <property type="match status" value="1"/>
</dbReference>
<dbReference type="SMART" id="SM00219">
    <property type="entry name" value="TyrKc"/>
    <property type="match status" value="1"/>
</dbReference>
<dbReference type="SUPFAM" id="SSF49265">
    <property type="entry name" value="Fibronectin type III"/>
    <property type="match status" value="1"/>
</dbReference>
<dbReference type="SUPFAM" id="SSF49785">
    <property type="entry name" value="Galactose-binding domain-like"/>
    <property type="match status" value="1"/>
</dbReference>
<dbReference type="SUPFAM" id="SSF57184">
    <property type="entry name" value="Growth factor receptor domain"/>
    <property type="match status" value="1"/>
</dbReference>
<dbReference type="SUPFAM" id="SSF56112">
    <property type="entry name" value="Protein kinase-like (PK-like)"/>
    <property type="match status" value="1"/>
</dbReference>
<dbReference type="SUPFAM" id="SSF47769">
    <property type="entry name" value="SAM/Pointed domain"/>
    <property type="match status" value="1"/>
</dbReference>
<dbReference type="PROSITE" id="PS01186">
    <property type="entry name" value="EGF_2"/>
    <property type="match status" value="1"/>
</dbReference>
<dbReference type="PROSITE" id="PS51550">
    <property type="entry name" value="EPH_LBD"/>
    <property type="match status" value="1"/>
</dbReference>
<dbReference type="PROSITE" id="PS50853">
    <property type="entry name" value="FN3"/>
    <property type="match status" value="2"/>
</dbReference>
<dbReference type="PROSITE" id="PS00107">
    <property type="entry name" value="PROTEIN_KINASE_ATP"/>
    <property type="match status" value="1"/>
</dbReference>
<dbReference type="PROSITE" id="PS50011">
    <property type="entry name" value="PROTEIN_KINASE_DOM"/>
    <property type="match status" value="1"/>
</dbReference>
<dbReference type="PROSITE" id="PS00109">
    <property type="entry name" value="PROTEIN_KINASE_TYR"/>
    <property type="match status" value="1"/>
</dbReference>
<dbReference type="PROSITE" id="PS00790">
    <property type="entry name" value="RECEPTOR_TYR_KIN_V_1"/>
    <property type="match status" value="1"/>
</dbReference>
<dbReference type="PROSITE" id="PS00791">
    <property type="entry name" value="RECEPTOR_TYR_KIN_V_2"/>
    <property type="match status" value="1"/>
</dbReference>
<dbReference type="PROSITE" id="PS50105">
    <property type="entry name" value="SAM_DOMAIN"/>
    <property type="match status" value="1"/>
</dbReference>
<name>EPHB1_MOUSE</name>
<keyword id="KW-0025">Alternative splicing</keyword>
<keyword id="KW-0067">ATP-binding</keyword>
<keyword id="KW-0130">Cell adhesion</keyword>
<keyword id="KW-1003">Cell membrane</keyword>
<keyword id="KW-0966">Cell projection</keyword>
<keyword id="KW-0967">Endosome</keyword>
<keyword id="KW-0325">Glycoprotein</keyword>
<keyword id="KW-0418">Kinase</keyword>
<keyword id="KW-0472">Membrane</keyword>
<keyword id="KW-0524">Neurogenesis</keyword>
<keyword id="KW-0547">Nucleotide-binding</keyword>
<keyword id="KW-0597">Phosphoprotein</keyword>
<keyword id="KW-0675">Receptor</keyword>
<keyword id="KW-1185">Reference proteome</keyword>
<keyword id="KW-0677">Repeat</keyword>
<keyword id="KW-0732">Signal</keyword>
<keyword id="KW-0808">Transferase</keyword>
<keyword id="KW-0812">Transmembrane</keyword>
<keyword id="KW-1133">Transmembrane helix</keyword>
<keyword id="KW-0829">Tyrosine-protein kinase</keyword>
<keyword id="KW-0832">Ubl conjugation</keyword>
<reference key="1">
    <citation type="journal article" date="2005" name="Science">
        <title>The transcriptional landscape of the mammalian genome.</title>
        <authorList>
            <person name="Carninci P."/>
            <person name="Kasukawa T."/>
            <person name="Katayama S."/>
            <person name="Gough J."/>
            <person name="Frith M.C."/>
            <person name="Maeda N."/>
            <person name="Oyama R."/>
            <person name="Ravasi T."/>
            <person name="Lenhard B."/>
            <person name="Wells C."/>
            <person name="Kodzius R."/>
            <person name="Shimokawa K."/>
            <person name="Bajic V.B."/>
            <person name="Brenner S.E."/>
            <person name="Batalov S."/>
            <person name="Forrest A.R."/>
            <person name="Zavolan M."/>
            <person name="Davis M.J."/>
            <person name="Wilming L.G."/>
            <person name="Aidinis V."/>
            <person name="Allen J.E."/>
            <person name="Ambesi-Impiombato A."/>
            <person name="Apweiler R."/>
            <person name="Aturaliya R.N."/>
            <person name="Bailey T.L."/>
            <person name="Bansal M."/>
            <person name="Baxter L."/>
            <person name="Beisel K.W."/>
            <person name="Bersano T."/>
            <person name="Bono H."/>
            <person name="Chalk A.M."/>
            <person name="Chiu K.P."/>
            <person name="Choudhary V."/>
            <person name="Christoffels A."/>
            <person name="Clutterbuck D.R."/>
            <person name="Crowe M.L."/>
            <person name="Dalla E."/>
            <person name="Dalrymple B.P."/>
            <person name="de Bono B."/>
            <person name="Della Gatta G."/>
            <person name="di Bernardo D."/>
            <person name="Down T."/>
            <person name="Engstrom P."/>
            <person name="Fagiolini M."/>
            <person name="Faulkner G."/>
            <person name="Fletcher C.F."/>
            <person name="Fukushima T."/>
            <person name="Furuno M."/>
            <person name="Futaki S."/>
            <person name="Gariboldi M."/>
            <person name="Georgii-Hemming P."/>
            <person name="Gingeras T.R."/>
            <person name="Gojobori T."/>
            <person name="Green R.E."/>
            <person name="Gustincich S."/>
            <person name="Harbers M."/>
            <person name="Hayashi Y."/>
            <person name="Hensch T.K."/>
            <person name="Hirokawa N."/>
            <person name="Hill D."/>
            <person name="Huminiecki L."/>
            <person name="Iacono M."/>
            <person name="Ikeo K."/>
            <person name="Iwama A."/>
            <person name="Ishikawa T."/>
            <person name="Jakt M."/>
            <person name="Kanapin A."/>
            <person name="Katoh M."/>
            <person name="Kawasawa Y."/>
            <person name="Kelso J."/>
            <person name="Kitamura H."/>
            <person name="Kitano H."/>
            <person name="Kollias G."/>
            <person name="Krishnan S.P."/>
            <person name="Kruger A."/>
            <person name="Kummerfeld S.K."/>
            <person name="Kurochkin I.V."/>
            <person name="Lareau L.F."/>
            <person name="Lazarevic D."/>
            <person name="Lipovich L."/>
            <person name="Liu J."/>
            <person name="Liuni S."/>
            <person name="McWilliam S."/>
            <person name="Madan Babu M."/>
            <person name="Madera M."/>
            <person name="Marchionni L."/>
            <person name="Matsuda H."/>
            <person name="Matsuzawa S."/>
            <person name="Miki H."/>
            <person name="Mignone F."/>
            <person name="Miyake S."/>
            <person name="Morris K."/>
            <person name="Mottagui-Tabar S."/>
            <person name="Mulder N."/>
            <person name="Nakano N."/>
            <person name="Nakauchi H."/>
            <person name="Ng P."/>
            <person name="Nilsson R."/>
            <person name="Nishiguchi S."/>
            <person name="Nishikawa S."/>
            <person name="Nori F."/>
            <person name="Ohara O."/>
            <person name="Okazaki Y."/>
            <person name="Orlando V."/>
            <person name="Pang K.C."/>
            <person name="Pavan W.J."/>
            <person name="Pavesi G."/>
            <person name="Pesole G."/>
            <person name="Petrovsky N."/>
            <person name="Piazza S."/>
            <person name="Reed J."/>
            <person name="Reid J.F."/>
            <person name="Ring B.Z."/>
            <person name="Ringwald M."/>
            <person name="Rost B."/>
            <person name="Ruan Y."/>
            <person name="Salzberg S.L."/>
            <person name="Sandelin A."/>
            <person name="Schneider C."/>
            <person name="Schoenbach C."/>
            <person name="Sekiguchi K."/>
            <person name="Semple C.A."/>
            <person name="Seno S."/>
            <person name="Sessa L."/>
            <person name="Sheng Y."/>
            <person name="Shibata Y."/>
            <person name="Shimada H."/>
            <person name="Shimada K."/>
            <person name="Silva D."/>
            <person name="Sinclair B."/>
            <person name="Sperling S."/>
            <person name="Stupka E."/>
            <person name="Sugiura K."/>
            <person name="Sultana R."/>
            <person name="Takenaka Y."/>
            <person name="Taki K."/>
            <person name="Tammoja K."/>
            <person name="Tan S.L."/>
            <person name="Tang S."/>
            <person name="Taylor M.S."/>
            <person name="Tegner J."/>
            <person name="Teichmann S.A."/>
            <person name="Ueda H.R."/>
            <person name="van Nimwegen E."/>
            <person name="Verardo R."/>
            <person name="Wei C.L."/>
            <person name="Yagi K."/>
            <person name="Yamanishi H."/>
            <person name="Zabarovsky E."/>
            <person name="Zhu S."/>
            <person name="Zimmer A."/>
            <person name="Hide W."/>
            <person name="Bult C."/>
            <person name="Grimmond S.M."/>
            <person name="Teasdale R.D."/>
            <person name="Liu E.T."/>
            <person name="Brusic V."/>
            <person name="Quackenbush J."/>
            <person name="Wahlestedt C."/>
            <person name="Mattick J.S."/>
            <person name="Hume D.A."/>
            <person name="Kai C."/>
            <person name="Sasaki D."/>
            <person name="Tomaru Y."/>
            <person name="Fukuda S."/>
            <person name="Kanamori-Katayama M."/>
            <person name="Suzuki M."/>
            <person name="Aoki J."/>
            <person name="Arakawa T."/>
            <person name="Iida J."/>
            <person name="Imamura K."/>
            <person name="Itoh M."/>
            <person name="Kato T."/>
            <person name="Kawaji H."/>
            <person name="Kawagashira N."/>
            <person name="Kawashima T."/>
            <person name="Kojima M."/>
            <person name="Kondo S."/>
            <person name="Konno H."/>
            <person name="Nakano K."/>
            <person name="Ninomiya N."/>
            <person name="Nishio T."/>
            <person name="Okada M."/>
            <person name="Plessy C."/>
            <person name="Shibata K."/>
            <person name="Shiraki T."/>
            <person name="Suzuki S."/>
            <person name="Tagami M."/>
            <person name="Waki K."/>
            <person name="Watahiki A."/>
            <person name="Okamura-Oho Y."/>
            <person name="Suzuki H."/>
            <person name="Kawai J."/>
            <person name="Hayashizaki Y."/>
        </authorList>
    </citation>
    <scope>NUCLEOTIDE SEQUENCE [LARGE SCALE MRNA] (ISOFORMS 1 AND 2)</scope>
    <source>
        <strain>C57BL/6J</strain>
        <tissue>Cerebellum</tissue>
        <tissue>Olfactory bulb</tissue>
    </source>
</reference>
<reference key="2">
    <citation type="journal article" date="2009" name="PLoS Biol.">
        <title>Lineage-specific biology revealed by a finished genome assembly of the mouse.</title>
        <authorList>
            <person name="Church D.M."/>
            <person name="Goodstadt L."/>
            <person name="Hillier L.W."/>
            <person name="Zody M.C."/>
            <person name="Goldstein S."/>
            <person name="She X."/>
            <person name="Bult C.J."/>
            <person name="Agarwala R."/>
            <person name="Cherry J.L."/>
            <person name="DiCuccio M."/>
            <person name="Hlavina W."/>
            <person name="Kapustin Y."/>
            <person name="Meric P."/>
            <person name="Maglott D."/>
            <person name="Birtle Z."/>
            <person name="Marques A.C."/>
            <person name="Graves T."/>
            <person name="Zhou S."/>
            <person name="Teague B."/>
            <person name="Potamousis K."/>
            <person name="Churas C."/>
            <person name="Place M."/>
            <person name="Herschleb J."/>
            <person name="Runnheim R."/>
            <person name="Forrest D."/>
            <person name="Amos-Landgraf J."/>
            <person name="Schwartz D.C."/>
            <person name="Cheng Z."/>
            <person name="Lindblad-Toh K."/>
            <person name="Eichler E.E."/>
            <person name="Ponting C.P."/>
        </authorList>
    </citation>
    <scope>NUCLEOTIDE SEQUENCE [LARGE SCALE GENOMIC DNA]</scope>
    <source>
        <strain>C57BL/6J</strain>
    </source>
</reference>
<reference key="3">
    <citation type="journal article" date="2004" name="Genome Res.">
        <title>The status, quality, and expansion of the NIH full-length cDNA project: the Mammalian Gene Collection (MGC).</title>
        <authorList>
            <consortium name="The MGC Project Team"/>
        </authorList>
    </citation>
    <scope>NUCLEOTIDE SEQUENCE [LARGE SCALE MRNA] (ISOFORM 1)</scope>
    <source>
        <strain>C57BL/6J</strain>
        <tissue>Brain</tissue>
    </source>
</reference>
<reference key="4">
    <citation type="journal article" date="1998" name="J. Biol. Chem.">
        <title>Nck recruitment to Eph receptor, EphB1/ELK, couples ligand activation to c-Jun kinase.</title>
        <authorList>
            <person name="Stein E."/>
            <person name="Huynh-Do U."/>
            <person name="Lane A.A."/>
            <person name="Cerretti D.P."/>
            <person name="Daniel T.O."/>
        </authorList>
    </citation>
    <scope>INTERACTION WITH NCK1</scope>
    <source>
        <tissue>Kidney</tissue>
    </source>
</reference>
<reference key="5">
    <citation type="journal article" date="1998" name="Neuron">
        <title>PDZ proteins bind, cluster, and synaptically colocalize with Eph receptors and their ephrin ligands.</title>
        <authorList>
            <person name="Torres R."/>
            <person name="Firestein B.L."/>
            <person name="Dong H."/>
            <person name="Staudinger J."/>
            <person name="Olson E.N."/>
            <person name="Huganir R.L."/>
            <person name="Bredt D.S."/>
            <person name="Gale N.W."/>
            <person name="Yancopoulos G.D."/>
        </authorList>
    </citation>
    <scope>INTERACTION WITH PICK1</scope>
</reference>
<reference key="6">
    <citation type="journal article" date="2002" name="J. Biol. Chem.">
        <title>EphB1 associates with Grb7 and regulates cell migration.</title>
        <authorList>
            <person name="Han D.C."/>
            <person name="Shen T.L."/>
            <person name="Miao H."/>
            <person name="Wang B."/>
            <person name="Guan J.L."/>
        </authorList>
    </citation>
    <scope>INTERACTION WITH GRB7</scope>
</reference>
<reference key="7">
    <citation type="journal article" date="2003" name="J. Cell Biol.">
        <title>EphB1 recruits c-Src and p52Shc to activate MAPK/ERK and promote chemotaxis.</title>
        <authorList>
            <person name="Vindis C."/>
            <person name="Cerretti D.P."/>
            <person name="Daniel T.O."/>
            <person name="Huynh-Do U."/>
        </authorList>
    </citation>
    <scope>INTERACTION WITH GRB2; SHC1 AND SRC</scope>
</reference>
<reference key="8">
    <citation type="journal article" date="2003" name="J. Cell Biol.">
        <title>Multiple EphB receptor tyrosine kinases shape dendritic spines in the hippocampus.</title>
        <authorList>
            <person name="Henkemeyer M."/>
            <person name="Itkis O.S."/>
            <person name="Ngo M."/>
            <person name="Hickmott P.W."/>
            <person name="Ethell I.M."/>
        </authorList>
    </citation>
    <scope>FUNCTION IN DENDRITIC SPINE DEVELOPMENT</scope>
    <scope>FUNCTION IN EXCITATORY SYNAPSE FORMATION</scope>
    <scope>SUBCELLULAR LOCATION</scope>
</reference>
<reference key="9">
    <citation type="journal article" date="2003" name="Neuron">
        <title>Ephrin-B2 and EphB1 mediate retinal axon divergence at the optic chiasm.</title>
        <authorList>
            <person name="Williams S.E."/>
            <person name="Mann F."/>
            <person name="Erskine L."/>
            <person name="Sakurai T."/>
            <person name="Wei S."/>
            <person name="Rossi D.J."/>
            <person name="Gale N.W."/>
            <person name="Holt C.E."/>
            <person name="Mason C.A."/>
            <person name="Henkemeyer M."/>
        </authorList>
    </citation>
    <scope>DISRUPTION PHENOTYPE</scope>
    <scope>FUNCTION IN RETINAL GLANGLION CELL AXON GUIDANCE</scope>
    <scope>DEVELOPMENTAL STAGE</scope>
</reference>
<reference key="10">
    <citation type="journal article" date="2007" name="J. Neurosci.">
        <title>EphB receptors regulate stem/progenitor cell proliferation, migration, and polarity during hippocampal neurogenesis.</title>
        <authorList>
            <person name="Chumley M.J."/>
            <person name="Catchpole T."/>
            <person name="Silvany R.E."/>
            <person name="Kernie S.G."/>
            <person name="Henkemeyer M."/>
        </authorList>
    </citation>
    <scope>FUNCTION IN NEUROGENESIS</scope>
    <scope>IDENTIFICATION OF EFNB3 AS LIGAND</scope>
    <scope>TISSUE SPECIFICITY</scope>
</reference>
<reference key="11">
    <citation type="journal article" date="2008" name="J. Neurosci.">
        <title>Zic2 regulates retinal ganglion cell axon avoidance of ephrinB2 through inducing expression of the guidance receptor EphB1.</title>
        <authorList>
            <person name="Lee R."/>
            <person name="Petros T.J."/>
            <person name="Mason C.A."/>
        </authorList>
    </citation>
    <scope>FUNCTION</scope>
    <scope>DEVELOPMENTAL STAGE</scope>
</reference>
<reference key="12">
    <citation type="journal article" date="2008" name="Mol. Pain">
        <title>Targeted mutation of EphB1 receptor prevents development of neuropathic hyperalgesia and physical dependence on morphine in mice.</title>
        <authorList>
            <person name="Han Y."/>
            <person name="Song X.S."/>
            <person name="Liu W.T."/>
            <person name="Henkemeyer M."/>
            <person name="Song X.J."/>
        </authorList>
    </citation>
    <scope>DISRUPTION PHENOTYPE</scope>
</reference>
<reference key="13">
    <citation type="journal article" date="2008" name="Traffic">
        <title>Ligand binding induces Cbl-dependent EphB1 receptor degradation through the lysosomal pathway.</title>
        <authorList>
            <person name="Fasen K."/>
            <person name="Cerretti D.P."/>
            <person name="Huynh-Do U."/>
        </authorList>
    </citation>
    <scope>UBIQUITINATION BY CBL</scope>
    <scope>INTERACTION WITH CBL</scope>
</reference>
<reference key="14">
    <citation type="journal article" date="2016" name="Front. Cell Dev. Biol.">
        <title>Gene expression profiling of muscle stem cells identifies novel regulators of postnatal myogenesis.</title>
        <authorList>
            <person name="Alonso-Martin S."/>
            <person name="Rochat A."/>
            <person name="Mademtzoglou D."/>
            <person name="Morais J."/>
            <person name="de Reynies A."/>
            <person name="Aurade F."/>
            <person name="Chang T.H."/>
            <person name="Zammit P.S."/>
            <person name="Relaix F."/>
        </authorList>
    </citation>
    <scope>FUNCTION</scope>
    <scope>DEVELOPMENTAL STAGE</scope>
    <scope>TISSUE SPECIFICITY</scope>
</reference>
<gene>
    <name type="primary">Ephb1</name>
</gene>
<evidence type="ECO:0000250" key="1"/>
<evidence type="ECO:0000250" key="2">
    <source>
        <dbReference type="UniProtKB" id="P54753"/>
    </source>
</evidence>
<evidence type="ECO:0000250" key="3">
    <source>
        <dbReference type="UniProtKB" id="P54762"/>
    </source>
</evidence>
<evidence type="ECO:0000255" key="4"/>
<evidence type="ECO:0000255" key="5">
    <source>
        <dbReference type="PROSITE-ProRule" id="PRU00159"/>
    </source>
</evidence>
<evidence type="ECO:0000255" key="6">
    <source>
        <dbReference type="PROSITE-ProRule" id="PRU00184"/>
    </source>
</evidence>
<evidence type="ECO:0000255" key="7">
    <source>
        <dbReference type="PROSITE-ProRule" id="PRU00316"/>
    </source>
</evidence>
<evidence type="ECO:0000255" key="8">
    <source>
        <dbReference type="PROSITE-ProRule" id="PRU00883"/>
    </source>
</evidence>
<evidence type="ECO:0000255" key="9">
    <source>
        <dbReference type="PROSITE-ProRule" id="PRU10028"/>
    </source>
</evidence>
<evidence type="ECO:0000269" key="10">
    <source>
    </source>
</evidence>
<evidence type="ECO:0000269" key="11">
    <source>
    </source>
</evidence>
<evidence type="ECO:0000269" key="12">
    <source>
    </source>
</evidence>
<evidence type="ECO:0000269" key="13">
    <source>
    </source>
</evidence>
<evidence type="ECO:0000269" key="14">
    <source>
    </source>
</evidence>
<evidence type="ECO:0000269" key="15">
    <source>
    </source>
</evidence>
<evidence type="ECO:0000269" key="16">
    <source>
    </source>
</evidence>
<evidence type="ECO:0000269" key="17">
    <source>
    </source>
</evidence>
<evidence type="ECO:0000269" key="18">
    <source>
    </source>
</evidence>
<evidence type="ECO:0000269" key="19">
    <source>
    </source>
</evidence>
<evidence type="ECO:0000269" key="20">
    <source>
    </source>
</evidence>
<evidence type="ECO:0000303" key="21">
    <source>
    </source>
</evidence>
<evidence type="ECO:0000305" key="22"/>
<sequence length="984" mass="109881">MALDCLLLFLLASAVAAMEETLMDTRTATAELGWTANPASGWEEVSGYDENLNTIRTYQVCNVFEPNQNNWLLTTFINRRGAHRIYTEMRFTVRDCSSLPNVPGSCKETFNLYYYETDSVIATKKSAFWSEAPYLKVDTIAADESFSQVDFGGRLMKVNTEVRSFGPLTRNGFYLAFQDYGACMSLLSVRVFFKKCPSIVQNFAVFPETMTGAESTSLVIARGTCIPNAEEVDVPIKLYCNGDGEWMVPIGRCTCKPGYEPENSVACKACPAGTFKASQEAEGCSHCPSNSRSPSEASPICTCRTGYYRADFDPPEVACTSVPSGPRNVISIVNETSIILEWHPPRETGGRDDVTYNIICKKCRADRRSCSRCDDNVEFVPRQLGLTECRVSISSLWAHTPYTFDIQAINGVSSKSPFPPQHVSVNITTNQAAPSTVPIMHQVSATMRSITLSWPQPEQPNGIILDYEIRYYEKEHNEFNSSMARSQTNTARIDGLRPGMVYVVQVRARTVAGYGKFSGKMCFQTLTDDDYKSELREQLPLIAGSAAAGVVFVVSLVAISIVCSRKRAYSKEAAYSDKLQHYSTGRGSPGMKIYIDPFTYEDPNEAVREFAKEIDVSFVKIEEVIGAGEFGEVYKGRLKLPGKREIYVAIKTLKAGYSEKQRRDFLSEASIMGQFDHPNIIRLEGVVTKSRPVMIITEFMENGALDSFLRQNDGQFTVIQLVGMLRGIAAGMKYLSEMNYVHRDLAARNILVNSNLVCKVSDFGLSRYLQDDTSDPTYTSSLGGKIPVRWTAPEAIAYRKFTSASDVWSYGIVMWEVMSFGERPYWDMSNQDVINAIEQDYRLPPPMDCPAALHQLMLDCWQKDRNSRPRFAEIVNTLDKMIRNPASLKTVATITAVPSQPLLDRSIPDFTAFTTVDDWLSAIKMVQYRDSFLTAGFTSLQLVTQMTSEDLLRIGVTLAGHQKKILSSIHSMRVQMNQSPSVMA</sequence>
<protein>
    <recommendedName>
        <fullName>Ephrin type-B receptor 1</fullName>
        <ecNumber>2.7.10.1</ecNumber>
    </recommendedName>
</protein>
<feature type="signal peptide" evidence="4">
    <location>
        <begin position="1"/>
        <end position="17"/>
    </location>
</feature>
<feature type="chain" id="PRO_0000260317" description="Ephrin type-B receptor 1">
    <location>
        <begin position="18"/>
        <end position="984"/>
    </location>
</feature>
<feature type="topological domain" description="Extracellular" evidence="4">
    <location>
        <begin position="18"/>
        <end position="540"/>
    </location>
</feature>
<feature type="transmembrane region" description="Helical" evidence="4">
    <location>
        <begin position="541"/>
        <end position="563"/>
    </location>
</feature>
<feature type="topological domain" description="Cytoplasmic" evidence="4">
    <location>
        <begin position="564"/>
        <end position="984"/>
    </location>
</feature>
<feature type="domain" description="Eph LBD" evidence="8">
    <location>
        <begin position="19"/>
        <end position="201"/>
    </location>
</feature>
<feature type="domain" description="Fibronectin type-III 1" evidence="7">
    <location>
        <begin position="322"/>
        <end position="432"/>
    </location>
</feature>
<feature type="domain" description="Fibronectin type-III 2" evidence="7">
    <location>
        <begin position="433"/>
        <end position="528"/>
    </location>
</feature>
<feature type="domain" description="Protein kinase" evidence="5">
    <location>
        <begin position="619"/>
        <end position="882"/>
    </location>
</feature>
<feature type="domain" description="SAM" evidence="6">
    <location>
        <begin position="911"/>
        <end position="975"/>
    </location>
</feature>
<feature type="short sequence motif" description="PDZ-binding" evidence="4">
    <location>
        <begin position="982"/>
        <end position="984"/>
    </location>
</feature>
<feature type="active site" description="Proton acceptor" evidence="5 9">
    <location>
        <position position="744"/>
    </location>
</feature>
<feature type="binding site" evidence="5">
    <location>
        <begin position="625"/>
        <end position="633"/>
    </location>
    <ligand>
        <name>ATP</name>
        <dbReference type="ChEBI" id="CHEBI:30616"/>
    </ligand>
</feature>
<feature type="binding site" evidence="5">
    <location>
        <position position="651"/>
    </location>
    <ligand>
        <name>ATP</name>
        <dbReference type="ChEBI" id="CHEBI:30616"/>
    </ligand>
</feature>
<feature type="modified residue" description="Phosphotyrosine" evidence="2">
    <location>
        <position position="600"/>
    </location>
</feature>
<feature type="modified residue" description="Phosphotyrosine; by autocatalysis" evidence="1">
    <location>
        <position position="928"/>
    </location>
</feature>
<feature type="glycosylation site" description="N-linked (GlcNAc...) asparagine" evidence="4">
    <location>
        <position position="334"/>
    </location>
</feature>
<feature type="glycosylation site" description="N-linked (GlcNAc...) asparagine" evidence="4">
    <location>
        <position position="426"/>
    </location>
</feature>
<feature type="glycosylation site" description="N-linked (GlcNAc...) asparagine" evidence="4">
    <location>
        <position position="480"/>
    </location>
</feature>
<feature type="splice variant" id="VSP_021595" description="In isoform 2." evidence="21">
    <location>
        <begin position="588"/>
        <end position="628"/>
    </location>
</feature>
<feature type="sequence conflict" description="In Ref. 1; BAE22386." evidence="22" ref="1">
    <original>L</original>
    <variation>Q</variation>
    <location>
        <position position="72"/>
    </location>
</feature>
<feature type="sequence conflict" description="In Ref. 1; BAE22386." evidence="22" ref="1">
    <original>L</original>
    <variation>P</variation>
    <location>
        <position position="187"/>
    </location>
</feature>
<feature type="sequence conflict" description="In Ref. 3; AAH57301." evidence="22" ref="3">
    <original>K</original>
    <variation>I</variation>
    <location>
        <position position="194"/>
    </location>
</feature>
<feature type="sequence conflict" description="In Ref. 1; BAC29348." evidence="22" ref="1">
    <original>P</original>
    <variation>Q</variation>
    <location>
        <position position="641"/>
    </location>
</feature>
<feature type="sequence conflict" description="In Ref. 3; AAH57301." evidence="22" ref="3">
    <original>P</original>
    <variation>R</variation>
    <location>
        <position position="678"/>
    </location>
</feature>
<comment type="function">
    <text evidence="12 13 15 16 18">Receptor tyrosine kinase which binds promiscuously transmembrane ephrin-B family ligands residing on adjacent cells, leading to contact-dependent bidirectional signaling into neighboring cells. The signaling pathway downstream of the receptor is referred to as forward signaling while the signaling pathway downstream of the ephrin ligand is referred to as reverse signaling. Cognate/functional ephrin ligands for this receptor include EFNB1, EFNB2 and EFNB3. During nervous system development, regulates retinal axon guidance redirecting ipsilaterally ventrotemporal retinal ganglion cells axons at the optic chiasm midline. This probably requires repulsive interaction with EFNB2. In the adult nervous system together with EFNB3, regulates chemotaxis, proliferation and polarity of the hippocampus neural progenitors. In addition to its role in axon guidance also plays an important redundant role with other ephrin-B receptors in development and maturation of dendritic spines and synapse formation. May also regulate angiogenesis. More generally, may play a role in targeted cell migration and adhesion. Upon activation by EFNB1 and probably other ephrin-B ligands activates the MAPK/ERK and the JNK signaling cascades to regulate cell migration and adhesion respectively. Involved in the maintenance of the pool of satellite cells (muscle stem cells) by promoting their self-renewal and reducing their activation and differentiation (PubMed:27446912).</text>
</comment>
<comment type="catalytic activity">
    <reaction evidence="9">
        <text>L-tyrosyl-[protein] + ATP = O-phospho-L-tyrosyl-[protein] + ADP + H(+)</text>
        <dbReference type="Rhea" id="RHEA:10596"/>
        <dbReference type="Rhea" id="RHEA-COMP:10136"/>
        <dbReference type="Rhea" id="RHEA-COMP:20101"/>
        <dbReference type="ChEBI" id="CHEBI:15378"/>
        <dbReference type="ChEBI" id="CHEBI:30616"/>
        <dbReference type="ChEBI" id="CHEBI:46858"/>
        <dbReference type="ChEBI" id="CHEBI:61978"/>
        <dbReference type="ChEBI" id="CHEBI:456216"/>
        <dbReference type="EC" id="2.7.10.1"/>
    </reaction>
</comment>
<comment type="subunit">
    <text evidence="3 10 11 14 19 20">Heterotetramer upon binding of the ligand. The heterotetramer is composed of an ephrin dimer and a receptor dimer. Oligomerization is probably required to induce biological responses (By similarity). Interacts with EPHB6; transphosphorylates EPHB6 to form an active signaling complex (By similarity). Interacts with PICK1. Interacts (through Tyr-594) with NCK1 (via SH2 domain); activates the JUN cascade to regulate cell adhesion. The ligand-activated form interacts (through Tyr-928) with GRB7 and GRB10 (via SH2 domains). The ligand-activated form interacts (residues within the catalytic domain) with GRB2 (via SH2 domain). Interacts with GRB2, SHC1 and SRC; activates the MAPK/ERK cascade to regulate cell migration. Interacts with CBL; regulates receptor degradation through ubiquitination. Interacts with ACP1.</text>
</comment>
<comment type="subcellular location">
    <subcellularLocation>
        <location evidence="3">Cell membrane</location>
        <topology evidence="3">Single-pass type I membrane protein</topology>
    </subcellularLocation>
    <subcellularLocation>
        <location evidence="3">Early endosome membrane</location>
    </subcellularLocation>
    <subcellularLocation>
        <location evidence="13">Cell projection</location>
        <location evidence="13">Dendrite</location>
    </subcellularLocation>
</comment>
<comment type="alternative products">
    <event type="alternative splicing"/>
    <isoform>
        <id>Q8CBF3-1</id>
        <name>1</name>
        <sequence type="displayed"/>
    </isoform>
    <isoform>
        <id>Q8CBF3-2</id>
        <name>2</name>
        <sequence type="described" ref="VSP_021595"/>
    </isoform>
</comment>
<comment type="tissue specificity">
    <text evidence="15 18">Expressed in neural stem and progenitor cells in the dentate gyrus (PubMed:18057206). Expressed in myogenic progenitor cells (PubMed:27446912).</text>
</comment>
<comment type="developmental stage">
    <text evidence="12 16 18">Expressed in growth cones of ventrotemporal (uncrossed) retinal ganglion cells that give rise to ipsilateral projections (at protein level) (PubMed:12971893, PubMed:18524895). In myogenic progenitor cells, initially expressed early during myogenic development (11.5 dpc), down-regulated during the fetal stage (lower levels at 17.5 dpc) to be re-expressed in postnatal satellite cells (PubMed:27446912).</text>
</comment>
<comment type="PTM">
    <text evidence="3">Phosphorylated. Autophosphorylation is stimulated by the ligand EFNB1. Required for interaction with SH2 domain-containing interactors, for activation of the MAPK/ERK and JUN signaling cascades and for ubiquitination by CBL (By similarity).</text>
</comment>
<comment type="PTM">
    <text evidence="14">Ubiquitinated; (EFNB1)ligand-induced poly- and/or multi-ubiquitination by CBL is regulated by SRC and leads to lysosomal degradation.</text>
</comment>
<comment type="disruption phenotype">
    <text evidence="12 17">Mice development is apparently normal. However, they display a dramatic reduction of ipsilateral retinal projection. Mice do not develop neuropathic algesia and physical dependence to morphine.</text>
</comment>
<comment type="similarity">
    <text evidence="5">Belongs to the protein kinase superfamily. Tyr protein kinase family. Ephrin receptor subfamily.</text>
</comment>
<organism>
    <name type="scientific">Mus musculus</name>
    <name type="common">Mouse</name>
    <dbReference type="NCBI Taxonomy" id="10090"/>
    <lineage>
        <taxon>Eukaryota</taxon>
        <taxon>Metazoa</taxon>
        <taxon>Chordata</taxon>
        <taxon>Craniata</taxon>
        <taxon>Vertebrata</taxon>
        <taxon>Euteleostomi</taxon>
        <taxon>Mammalia</taxon>
        <taxon>Eutheria</taxon>
        <taxon>Euarchontoglires</taxon>
        <taxon>Glires</taxon>
        <taxon>Rodentia</taxon>
        <taxon>Myomorpha</taxon>
        <taxon>Muroidea</taxon>
        <taxon>Muridae</taxon>
        <taxon>Murinae</taxon>
        <taxon>Mus</taxon>
        <taxon>Mus</taxon>
    </lineage>
</organism>